<organism>
    <name type="scientific">Bos taurus</name>
    <name type="common">Bovine</name>
    <dbReference type="NCBI Taxonomy" id="9913"/>
    <lineage>
        <taxon>Eukaryota</taxon>
        <taxon>Metazoa</taxon>
        <taxon>Chordata</taxon>
        <taxon>Craniata</taxon>
        <taxon>Vertebrata</taxon>
        <taxon>Euteleostomi</taxon>
        <taxon>Mammalia</taxon>
        <taxon>Eutheria</taxon>
        <taxon>Laurasiatheria</taxon>
        <taxon>Artiodactyla</taxon>
        <taxon>Ruminantia</taxon>
        <taxon>Pecora</taxon>
        <taxon>Bovidae</taxon>
        <taxon>Bovinae</taxon>
        <taxon>Bos</taxon>
    </lineage>
</organism>
<sequence length="1209" mass="137812">MKFSKEIEVFNPPLASSASSGPWVHSVFAFTHSWPRKTLFKRDSAVTHRLYGDISRDFQGTSENGVIFQKCAVVSVQSEWPSAHVRLFVNNTRTPTAANLSDLFLLDNITGLTIRESAGNQTSRGFQAFRKKFLQVGDSFSVSYTASLEARDVGSGDILLLPAQLSFQSSSPNRTQLKAPFTITAEEKITVLPNHGLHAAGFCVAFILSLVLTWAVLFFMVRYQCVKGSSLTRHQVQHHENKLEHSQFTSADGVNEDLALNDQMIDILSSEDPGSMLQALEELEIATLNRADSDLEACRTQISKDIIALLLKNLTSSGQLSPQVERRMGAVFKKQFLLLEKEIQEEYDRKMVALTAECDLETRKKTESQYQREMAAMEEAEEVLKRVSERSAVECSSLLRTLHGLEQEHLRRSLALQQEEDLAKAHRQLAIFQRNELHNIFFTQIKSAIFKGELKPEAAKMLLQDYSKIQESVEELMDFFQASKRYHLSKRFGHREYLVQNIQSSETRMQGLLSTASAQLTLLIQKHERAGYLDEDQMQVLLERAQTEVFSIKQKLDNDLKQEKKKLHQKLIIKRRREMLQKHKEQRREQLSIAEASGAAEDAGQYLGQWRGLMAEHSAALEELQERLDQAALDELRALTLSLSEKATEELRRLQNSGMTQELLKRGVPWLFLQQILEEHSRDLAARAERLEGEERDRGQEGVQSVRQRLKDDALEASTEEQAELRHWEHLIFTKLCSSAFSLSEEELLGMRQEVHGCFAQMDRSLALPKIRARVLLQRFQTAWREAEFLKLDQAMTAPELQPQSKARKPRSKSRSKIDLLKKCTEDKIQLFKEQAPEDLVEKVRGELLRERVQQLEAQEGLFAESLVSLQFQKAARMARTLWAYTALLSIQDLLLEELNSSETLTKSACMQILESHSPELQELERKLEDQLAHQEAAQLQRALDSWQQWAGEGPALLQEPEETDSERHVSAVLQRALSKGQKLLEYHQQSLREEQEDSVVLEDLLENMETDTFVTLYGQELRLASYLSKLTMLPGGTLRRLLTVALPAASQAELLAVLDSVGQKHQDHSVENDGSRVQADLGRRGKHQGWWQALESKLRGELINRGLEKMLWAQKRKESILKKTCPPLRERVIFSGKRSWPHLSLESTDELTPVPIVGAEAVDLLNTGEKLFIFRNPKEPEISLHVPPRKKKKNFLNAKKAAWALGLN</sequence>
<keyword id="KW-1003">Cell membrane</keyword>
<keyword id="KW-0966">Cell projection</keyword>
<keyword id="KW-0175">Coiled coil</keyword>
<keyword id="KW-0963">Cytoplasm</keyword>
<keyword id="KW-0206">Cytoskeleton</keyword>
<keyword id="KW-0242">Dwarfism</keyword>
<keyword id="KW-0325">Glycoprotein</keyword>
<keyword id="KW-0472">Membrane</keyword>
<keyword id="KW-0539">Nucleus</keyword>
<keyword id="KW-1185">Reference proteome</keyword>
<keyword id="KW-0812">Transmembrane</keyword>
<keyword id="KW-1133">Transmembrane helix</keyword>
<gene>
    <name type="primary">EVC2</name>
    <name type="synonym">LBN</name>
</gene>
<proteinExistence type="evidence at transcript level"/>
<protein>
    <recommendedName>
        <fullName>Limbin</fullName>
    </recommendedName>
</protein>
<comment type="function">
    <text evidence="1">Component of the EvC complex that positively regulates ciliary Hedgehog (Hh) signaling. Plays a critical role in bone formation and skeletal development. May be involved in early embryonic morphogenesis.</text>
</comment>
<comment type="subunit">
    <text evidence="1">Component of the EvC complex composed of EFCAB7, IQCE, EVC2 and EVC; built from two subcomplexes, EVC2:EVC and EFCAB7:IQCE. Interacts with EVC. Interacts (via N-terminal end) with EFCAB7. Interacts (via N-terminal end) with IQCE.</text>
</comment>
<comment type="subcellular location">
    <subcellularLocation>
        <location evidence="1">Cell membrane</location>
        <topology evidence="1">Single-pass type I membrane protein</topology>
    </subcellularLocation>
    <subcellularLocation>
        <location evidence="1">Cytoplasm</location>
        <location evidence="1">Cytoskeleton</location>
        <location evidence="1">Cilium basal body</location>
    </subcellularLocation>
    <subcellularLocation>
        <location evidence="1">Cell projection</location>
        <location evidence="1">Cilium</location>
    </subcellularLocation>
    <subcellularLocation>
        <location evidence="1">Cell projection</location>
        <location evidence="1">Cilium membrane</location>
    </subcellularLocation>
    <subcellularLocation>
        <location evidence="1">Nucleus</location>
    </subcellularLocation>
    <text evidence="1">The EvC complex localizes at the base of cilia in the EvC zone of primary cilia in a EFCAB7-dependent manner.</text>
</comment>
<comment type="disease">
    <text evidence="4">Defects in EVC2 are the cause of bovine chondrodysplastic dwarfism (BCD). BCD is an autosomal recessive disorder characterized by short limbs, joint abnormalities and ateliosis.</text>
</comment>
<accession>Q8MI28</accession>
<dbReference type="EMBL" id="AB083065">
    <property type="protein sequence ID" value="BAC06588.1"/>
    <property type="molecule type" value="mRNA"/>
</dbReference>
<dbReference type="RefSeq" id="NP_776352.1">
    <property type="nucleotide sequence ID" value="NM_173927.1"/>
</dbReference>
<dbReference type="RefSeq" id="XP_024848741.1">
    <property type="nucleotide sequence ID" value="XM_024992973.2"/>
</dbReference>
<dbReference type="RefSeq" id="XP_024848742.1">
    <property type="nucleotide sequence ID" value="XM_024992974.2"/>
</dbReference>
<dbReference type="RefSeq" id="XP_024848743.1">
    <property type="nucleotide sequence ID" value="XM_024992975.2"/>
</dbReference>
<dbReference type="SMR" id="Q8MI28"/>
<dbReference type="FunCoup" id="Q8MI28">
    <property type="interactions" value="413"/>
</dbReference>
<dbReference type="STRING" id="9913.ENSBTAP00000005613"/>
<dbReference type="GlyCosmos" id="Q8MI28">
    <property type="glycosylation" value="1 site, No reported glycans"/>
</dbReference>
<dbReference type="GlyGen" id="Q8MI28">
    <property type="glycosylation" value="1 site"/>
</dbReference>
<dbReference type="PaxDb" id="9913-ENSBTAP00000005613"/>
<dbReference type="Ensembl" id="ENSBTAT00000116485.1">
    <property type="protein sequence ID" value="ENSBTAP00000089037.1"/>
    <property type="gene ID" value="ENSBTAG00000004277.7"/>
</dbReference>
<dbReference type="GeneID" id="280834"/>
<dbReference type="KEGG" id="bta:280834"/>
<dbReference type="CTD" id="132884"/>
<dbReference type="VGNC" id="VGNC:28635">
    <property type="gene designation" value="EVC2"/>
</dbReference>
<dbReference type="eggNOG" id="ENOG502QQ5U">
    <property type="taxonomic scope" value="Eukaryota"/>
</dbReference>
<dbReference type="GeneTree" id="ENSGT00940000154127"/>
<dbReference type="InParanoid" id="Q8MI28"/>
<dbReference type="OrthoDB" id="8852462at2759"/>
<dbReference type="Proteomes" id="UP000009136">
    <property type="component" value="Chromosome 6"/>
</dbReference>
<dbReference type="GO" id="GO:0060170">
    <property type="term" value="C:ciliary membrane"/>
    <property type="evidence" value="ECO:0000318"/>
    <property type="project" value="GO_Central"/>
</dbReference>
<dbReference type="GO" id="GO:0005737">
    <property type="term" value="C:cytoplasm"/>
    <property type="evidence" value="ECO:0007669"/>
    <property type="project" value="UniProtKB-KW"/>
</dbReference>
<dbReference type="GO" id="GO:0005856">
    <property type="term" value="C:cytoskeleton"/>
    <property type="evidence" value="ECO:0007669"/>
    <property type="project" value="UniProtKB-KW"/>
</dbReference>
<dbReference type="GO" id="GO:0005634">
    <property type="term" value="C:nucleus"/>
    <property type="evidence" value="ECO:0007669"/>
    <property type="project" value="UniProtKB-SubCell"/>
</dbReference>
<dbReference type="GO" id="GO:0098797">
    <property type="term" value="C:plasma membrane protein complex"/>
    <property type="evidence" value="ECO:0000318"/>
    <property type="project" value="GO_Central"/>
</dbReference>
<dbReference type="GO" id="GO:0007224">
    <property type="term" value="P:smoothened signaling pathway"/>
    <property type="evidence" value="ECO:0007669"/>
    <property type="project" value="InterPro"/>
</dbReference>
<dbReference type="InterPro" id="IPR022076">
    <property type="entry name" value="Limbin"/>
</dbReference>
<dbReference type="InterPro" id="IPR026501">
    <property type="entry name" value="Limbin/EVC"/>
</dbReference>
<dbReference type="PANTHER" id="PTHR16795:SF14">
    <property type="entry name" value="LIMBIN"/>
    <property type="match status" value="1"/>
</dbReference>
<dbReference type="PANTHER" id="PTHR16795">
    <property type="entry name" value="LIMBIN/ELLIS-VAN CREVELD PROTEIN"/>
    <property type="match status" value="1"/>
</dbReference>
<dbReference type="Pfam" id="PF12297">
    <property type="entry name" value="EVC2_like"/>
    <property type="match status" value="1"/>
</dbReference>
<feature type="chain" id="PRO_0000084362" description="Limbin">
    <location>
        <begin position="1"/>
        <end position="1209"/>
    </location>
</feature>
<feature type="topological domain" description="Extracellular" evidence="2">
    <location>
        <begin position="1"/>
        <end position="200"/>
    </location>
</feature>
<feature type="transmembrane region" description="Helical" evidence="2">
    <location>
        <begin position="201"/>
        <end position="221"/>
    </location>
</feature>
<feature type="topological domain" description="Cytoplasmic" evidence="2">
    <location>
        <begin position="222"/>
        <end position="1209"/>
    </location>
</feature>
<feature type="region of interest" description="Disordered" evidence="3">
    <location>
        <begin position="689"/>
        <end position="714"/>
    </location>
</feature>
<feature type="coiled-coil region" evidence="2">
    <location>
        <begin position="355"/>
        <end position="394"/>
    </location>
</feature>
<feature type="coiled-coil region" evidence="2">
    <location>
        <begin position="553"/>
        <end position="697"/>
    </location>
</feature>
<feature type="coiled-coil region" evidence="2">
    <location>
        <begin position="920"/>
        <end position="1012"/>
    </location>
</feature>
<feature type="compositionally biased region" description="Basic and acidic residues" evidence="3">
    <location>
        <begin position="689"/>
        <end position="700"/>
    </location>
</feature>
<feature type="glycosylation site" description="N-linked (GlcNAc...) asparagine" evidence="2">
    <location>
        <position position="120"/>
    </location>
</feature>
<name>LBN_BOVIN</name>
<reference key="1">
    <citation type="journal article" date="2002" name="Proc. Natl. Acad. Sci. U.S.A.">
        <title>Positional cloning of the gene LIMBIN responsible for bovine chondrodysplastic dwarfism.</title>
        <authorList>
            <person name="Takeda H."/>
            <person name="Takami M."/>
            <person name="Oguni T."/>
            <person name="Tsuji T."/>
            <person name="Yoneda K."/>
            <person name="Sato H."/>
            <person name="Ihara N."/>
            <person name="Itoh T."/>
            <person name="Kata S.R."/>
            <person name="Mishina Y."/>
            <person name="Womack J.E."/>
            <person name="Moritomo Y."/>
            <person name="Sugimoto Y."/>
            <person name="Kunieda T."/>
        </authorList>
    </citation>
    <scope>NUCLEOTIDE SEQUENCE [MRNA]</scope>
    <scope>DISEASE</scope>
    <source>
        <tissue>Bone</tissue>
    </source>
</reference>
<evidence type="ECO:0000250" key="1">
    <source>
        <dbReference type="UniProtKB" id="Q8K1G2"/>
    </source>
</evidence>
<evidence type="ECO:0000255" key="2"/>
<evidence type="ECO:0000256" key="3">
    <source>
        <dbReference type="SAM" id="MobiDB-lite"/>
    </source>
</evidence>
<evidence type="ECO:0000269" key="4">
    <source>
    </source>
</evidence>